<gene>
    <name evidence="21" type="primary">Cep164</name>
    <name evidence="19" type="synonym">Kiaa1052</name>
</gene>
<dbReference type="EMBL" id="AC126804">
    <property type="status" value="NOT_ANNOTATED_CDS"/>
    <property type="molecule type" value="Genomic_DNA"/>
</dbReference>
<dbReference type="EMBL" id="AK032890">
    <property type="protein sequence ID" value="BAC28073.1"/>
    <property type="molecule type" value="mRNA"/>
</dbReference>
<dbReference type="EMBL" id="AK050991">
    <property type="protein sequence ID" value="BAC34489.1"/>
    <property type="status" value="ALT_INIT"/>
    <property type="molecule type" value="mRNA"/>
</dbReference>
<dbReference type="EMBL" id="AK158671">
    <property type="protein sequence ID" value="BAE34604.1"/>
    <property type="molecule type" value="mRNA"/>
</dbReference>
<dbReference type="EMBL" id="AK220365">
    <property type="protein sequence ID" value="BAD90247.1"/>
    <property type="molecule type" value="mRNA"/>
</dbReference>
<dbReference type="EMBL" id="BC066145">
    <property type="protein sequence ID" value="AAH66145.1"/>
    <property type="status" value="ALT_INIT"/>
    <property type="molecule type" value="mRNA"/>
</dbReference>
<dbReference type="SMR" id="Q5DU05"/>
<dbReference type="FunCoup" id="Q5DU05">
    <property type="interactions" value="597"/>
</dbReference>
<dbReference type="STRING" id="10090.ENSMUSP00000114053"/>
<dbReference type="GlyGen" id="Q5DU05">
    <property type="glycosylation" value="3 sites"/>
</dbReference>
<dbReference type="iPTMnet" id="Q5DU05"/>
<dbReference type="PhosphoSitePlus" id="Q5DU05"/>
<dbReference type="jPOST" id="Q5DU05"/>
<dbReference type="PaxDb" id="10090-ENSMUSP00000114053"/>
<dbReference type="ProteomicsDB" id="281445">
    <molecule id="Q5DU05-1"/>
</dbReference>
<dbReference type="ProteomicsDB" id="281446">
    <molecule id="Q5DU05-2"/>
</dbReference>
<dbReference type="ProteomicsDB" id="281447">
    <molecule id="Q5DU05-3"/>
</dbReference>
<dbReference type="UCSC" id="uc009pgb.2">
    <molecule id="Q5DU05-2"/>
    <property type="organism name" value="mouse"/>
</dbReference>
<dbReference type="AGR" id="MGI:2384878"/>
<dbReference type="MGI" id="MGI:2384878">
    <property type="gene designation" value="Cep164"/>
</dbReference>
<dbReference type="eggNOG" id="ENOG502QR4A">
    <property type="taxonomic scope" value="Eukaryota"/>
</dbReference>
<dbReference type="InParanoid" id="Q5DU05"/>
<dbReference type="OrthoDB" id="6344460at2759"/>
<dbReference type="PhylomeDB" id="Q5DU05"/>
<dbReference type="Reactome" id="R-MMU-2565942">
    <property type="pathway name" value="Regulation of PLK1 Activity at G2/M Transition"/>
</dbReference>
<dbReference type="Reactome" id="R-MMU-380259">
    <property type="pathway name" value="Loss of Nlp from mitotic centrosomes"/>
</dbReference>
<dbReference type="Reactome" id="R-MMU-380270">
    <property type="pathway name" value="Recruitment of mitotic centrosome proteins and complexes"/>
</dbReference>
<dbReference type="Reactome" id="R-MMU-380284">
    <property type="pathway name" value="Loss of proteins required for interphase microtubule organization from the centrosome"/>
</dbReference>
<dbReference type="Reactome" id="R-MMU-380320">
    <property type="pathway name" value="Recruitment of NuMA to mitotic centrosomes"/>
</dbReference>
<dbReference type="Reactome" id="R-MMU-5620912">
    <property type="pathway name" value="Anchoring of the basal body to the plasma membrane"/>
</dbReference>
<dbReference type="Reactome" id="R-MMU-8854518">
    <property type="pathway name" value="AURKA Activation by TPX2"/>
</dbReference>
<dbReference type="ChiTaRS" id="Cep164">
    <property type="organism name" value="mouse"/>
</dbReference>
<dbReference type="PRO" id="PR:Q5DU05"/>
<dbReference type="Proteomes" id="UP000000589">
    <property type="component" value="Unplaced"/>
</dbReference>
<dbReference type="RNAct" id="Q5DU05">
    <property type="molecule type" value="protein"/>
</dbReference>
<dbReference type="GO" id="GO:0097729">
    <property type="term" value="C:9+2 motile cilium"/>
    <property type="evidence" value="ECO:0000314"/>
    <property type="project" value="MGI"/>
</dbReference>
<dbReference type="GO" id="GO:0045177">
    <property type="term" value="C:apical part of cell"/>
    <property type="evidence" value="ECO:0000314"/>
    <property type="project" value="MGI"/>
</dbReference>
<dbReference type="GO" id="GO:0005814">
    <property type="term" value="C:centriole"/>
    <property type="evidence" value="ECO:0000314"/>
    <property type="project" value="UniProtKB"/>
</dbReference>
<dbReference type="GO" id="GO:0097539">
    <property type="term" value="C:ciliary transition fiber"/>
    <property type="evidence" value="ECO:0000314"/>
    <property type="project" value="MGI"/>
</dbReference>
<dbReference type="GO" id="GO:0005929">
    <property type="term" value="C:cilium"/>
    <property type="evidence" value="ECO:0000314"/>
    <property type="project" value="MGI"/>
</dbReference>
<dbReference type="GO" id="GO:0005737">
    <property type="term" value="C:cytoplasm"/>
    <property type="evidence" value="ECO:0007669"/>
    <property type="project" value="UniProtKB-KW"/>
</dbReference>
<dbReference type="GO" id="GO:0097386">
    <property type="term" value="C:glial cell projection"/>
    <property type="evidence" value="ECO:0000314"/>
    <property type="project" value="MGI"/>
</dbReference>
<dbReference type="GO" id="GO:0005634">
    <property type="term" value="C:nucleus"/>
    <property type="evidence" value="ECO:0007669"/>
    <property type="project" value="UniProtKB-SubCell"/>
</dbReference>
<dbReference type="GO" id="GO:0051301">
    <property type="term" value="P:cell division"/>
    <property type="evidence" value="ECO:0007669"/>
    <property type="project" value="UniProtKB-KW"/>
</dbReference>
<dbReference type="GO" id="GO:0060271">
    <property type="term" value="P:cilium assembly"/>
    <property type="evidence" value="ECO:0000250"/>
    <property type="project" value="UniProtKB"/>
</dbReference>
<dbReference type="GO" id="GO:0006281">
    <property type="term" value="P:DNA repair"/>
    <property type="evidence" value="ECO:0007669"/>
    <property type="project" value="UniProtKB-KW"/>
</dbReference>
<dbReference type="CDD" id="cd00201">
    <property type="entry name" value="WW"/>
    <property type="match status" value="1"/>
</dbReference>
<dbReference type="FunFam" id="3.30.1470.10:FF:000001">
    <property type="entry name" value="Centrosomal protein of 164 kDa"/>
    <property type="match status" value="1"/>
</dbReference>
<dbReference type="Gene3D" id="3.30.1470.10">
    <property type="entry name" value="Photosystem I PsaD, reaction center subunit II"/>
    <property type="match status" value="1"/>
</dbReference>
<dbReference type="InterPro" id="IPR051841">
    <property type="entry name" value="MT-Golgi_org_protein"/>
</dbReference>
<dbReference type="InterPro" id="IPR001202">
    <property type="entry name" value="WW_dom"/>
</dbReference>
<dbReference type="InterPro" id="IPR036020">
    <property type="entry name" value="WW_dom_sf"/>
</dbReference>
<dbReference type="PANTHER" id="PTHR18902:SF27">
    <property type="entry name" value="CENTROSOMAL PROTEIN OF 164 KDA"/>
    <property type="match status" value="1"/>
</dbReference>
<dbReference type="PANTHER" id="PTHR18902">
    <property type="entry name" value="NUCLEAR MITOTIC APPARATUS PROTEIN 1-RELATED"/>
    <property type="match status" value="1"/>
</dbReference>
<dbReference type="SMART" id="SM00456">
    <property type="entry name" value="WW"/>
    <property type="match status" value="1"/>
</dbReference>
<dbReference type="SUPFAM" id="SSF51045">
    <property type="entry name" value="WW domain"/>
    <property type="match status" value="1"/>
</dbReference>
<dbReference type="PROSITE" id="PS50020">
    <property type="entry name" value="WW_DOMAIN_2"/>
    <property type="match status" value="1"/>
</dbReference>
<proteinExistence type="evidence at protein level"/>
<feature type="chain" id="PRO_0000370737" description="Centrosomal protein of 164 kDa">
    <location>
        <begin position="1"/>
        <end position="1446"/>
    </location>
</feature>
<feature type="domain" description="WW" evidence="4">
    <location>
        <begin position="56"/>
        <end position="89"/>
    </location>
</feature>
<feature type="region of interest" description="Interaction with ATRIP" evidence="2">
    <location>
        <begin position="1"/>
        <end position="195"/>
    </location>
</feature>
<feature type="region of interest" description="Disordered" evidence="5">
    <location>
        <begin position="106"/>
        <end position="132"/>
    </location>
</feature>
<feature type="region of interest" description="Disordered" evidence="5">
    <location>
        <begin position="159"/>
        <end position="185"/>
    </location>
</feature>
<feature type="region of interest" description="Disordered" evidence="5">
    <location>
        <begin position="217"/>
        <end position="238"/>
    </location>
</feature>
<feature type="region of interest" description="Disordered" evidence="5">
    <location>
        <begin position="250"/>
        <end position="408"/>
    </location>
</feature>
<feature type="region of interest" description="Disordered" evidence="5">
    <location>
        <begin position="424"/>
        <end position="570"/>
    </location>
</feature>
<feature type="region of interest" description="Disordered" evidence="5">
    <location>
        <begin position="830"/>
        <end position="849"/>
    </location>
</feature>
<feature type="region of interest" description="Disordered" evidence="5">
    <location>
        <begin position="1261"/>
        <end position="1287"/>
    </location>
</feature>
<feature type="coiled-coil region" evidence="3">
    <location>
        <begin position="1143"/>
        <end position="1197"/>
    </location>
</feature>
<feature type="compositionally biased region" description="Basic residues" evidence="5">
    <location>
        <begin position="109"/>
        <end position="121"/>
    </location>
</feature>
<feature type="compositionally biased region" description="Polar residues" evidence="5">
    <location>
        <begin position="164"/>
        <end position="176"/>
    </location>
</feature>
<feature type="compositionally biased region" description="Acidic residues" evidence="5">
    <location>
        <begin position="218"/>
        <end position="228"/>
    </location>
</feature>
<feature type="compositionally biased region" description="Basic and acidic residues" evidence="5">
    <location>
        <begin position="257"/>
        <end position="277"/>
    </location>
</feature>
<feature type="compositionally biased region" description="Polar residues" evidence="5">
    <location>
        <begin position="288"/>
        <end position="312"/>
    </location>
</feature>
<feature type="compositionally biased region" description="Basic and acidic residues" evidence="5">
    <location>
        <begin position="355"/>
        <end position="372"/>
    </location>
</feature>
<feature type="compositionally biased region" description="Basic and acidic residues" evidence="5">
    <location>
        <begin position="384"/>
        <end position="397"/>
    </location>
</feature>
<feature type="compositionally biased region" description="Polar residues" evidence="5">
    <location>
        <begin position="451"/>
        <end position="461"/>
    </location>
</feature>
<feature type="compositionally biased region" description="Basic and acidic residues" evidence="5">
    <location>
        <begin position="490"/>
        <end position="499"/>
    </location>
</feature>
<feature type="compositionally biased region" description="Basic and acidic residues" evidence="5">
    <location>
        <begin position="525"/>
        <end position="534"/>
    </location>
</feature>
<feature type="compositionally biased region" description="Pro residues" evidence="5">
    <location>
        <begin position="1267"/>
        <end position="1281"/>
    </location>
</feature>
<feature type="modified residue" description="Phosphoserine" evidence="2">
    <location>
        <position position="202"/>
    </location>
</feature>
<feature type="modified residue" description="Phosphoserine" evidence="2">
    <location>
        <position position="1369"/>
    </location>
</feature>
<feature type="modified residue" description="Phosphoserine" evidence="2">
    <location>
        <position position="1371"/>
    </location>
</feature>
<feature type="splice variant" id="VSP_053075" description="In isoform 2." evidence="12 13 14">
    <location>
        <begin position="186"/>
        <end position="188"/>
    </location>
</feature>
<feature type="splice variant" id="VSP_053077" description="In isoform 2." evidence="12 13 14">
    <location>
        <begin position="514"/>
        <end position="626"/>
    </location>
</feature>
<feature type="splice variant" id="VSP_053078" description="In isoform 3." evidence="13">
    <location>
        <begin position="515"/>
        <end position="563"/>
    </location>
</feature>
<feature type="splice variant" id="VSP_053079" description="In isoform 3." evidence="13">
    <original>EERLW</original>
    <variation>EDEEEEGEEEEEEEEKEEEEE</variation>
    <location>
        <begin position="604"/>
        <end position="608"/>
    </location>
</feature>
<feature type="sequence conflict" description="In Ref. 3; BAD90247." evidence="15" ref="3">
    <location>
        <position position="1021"/>
    </location>
</feature>
<feature type="sequence conflict" description="In Ref. 4; AAH66145." evidence="15" ref="4">
    <original>A</original>
    <variation>V</variation>
    <location>
        <position position="1025"/>
    </location>
</feature>
<feature type="sequence conflict" description="In Ref. 4; AAH66145." evidence="15" ref="4">
    <original>S</original>
    <variation>P</variation>
    <location>
        <position position="1192"/>
    </location>
</feature>
<name>CE164_MOUSE</name>
<comment type="function">
    <text evidence="1 8">Plays a role in microtubule organization and/or maintenance for the formation of primary cilia (PC), a microtubule-based structure that protrudes from the surface of epithelial cells. Plays a critical role in G2/M checkpoint and nuclear divisions. A key player in the DNA damage-activated ATR/ATM signaling cascade since it is required for the proper phosphorylation of H2AX, RPA, CHEK2 and CHEK1. Plays a critical role in chromosome segregation, acting as a mediator required for the maintenance of genomic stability through modulation of MDC1, RPA and CHEK1 (By similarity).</text>
</comment>
<comment type="subunit">
    <text evidence="1 9">Interacts (via N-terminus) with ATRIP. Interacts with ATM, ATR and MDC1. Interacts with XPA (via N-terminus) upon UV irradiation (By similarity). Interacts with CEP83, CCDC92, TTBK2, DVL3, NPHP3 and weakly with NPHP4 (By similarity). Interacts with DZIP1 (PubMed:23955340).</text>
</comment>
<comment type="subcellular location">
    <subcellularLocation>
        <location evidence="8 10">Cytoplasm</location>
        <location evidence="8 10">Cytoskeleton</location>
        <location evidence="8 10">Microtubule organizing center</location>
        <location evidence="8 10">Centrosome</location>
        <location evidence="8 10">Centriole</location>
    </subcellularLocation>
    <subcellularLocation>
        <location evidence="2">Nucleus</location>
    </subcellularLocation>
    <text evidence="2 10">Localizes specifically to very distally located appendage structures on the mature centriole from which initiate PC formation (PubMed:26337392). Persisted at centrioles throughout mitosis (By similarity). In response to DNA damage, it translocates to nuclear foci that contain the DNA damage response proteins KAT5/TIP60 and CHEK1 (By similarity).</text>
</comment>
<comment type="alternative products">
    <event type="alternative splicing"/>
    <isoform>
        <id>Q5DU05-1</id>
        <name evidence="7">1</name>
        <sequence type="displayed"/>
    </isoform>
    <isoform>
        <id>Q5DU05-2</id>
        <name evidence="6 7 11">2</name>
        <sequence type="described" ref="VSP_053075 VSP_053077"/>
    </isoform>
    <isoform>
        <id>Q5DU05-3</id>
        <name evidence="7">3</name>
        <sequence type="described" ref="VSP_053078 VSP_053079"/>
    </isoform>
</comment>
<comment type="sequence caution" evidence="15">
    <conflict type="erroneous initiation">
        <sequence resource="EMBL-CDS" id="AAH66145"/>
    </conflict>
</comment>
<comment type="sequence caution" evidence="15">
    <conflict type="erroneous initiation">
        <sequence resource="EMBL-CDS" id="BAC34489"/>
    </conflict>
</comment>
<keyword id="KW-0025">Alternative splicing</keyword>
<keyword id="KW-0131">Cell cycle</keyword>
<keyword id="KW-0132">Cell division</keyword>
<keyword id="KW-0970">Cilium biogenesis/degradation</keyword>
<keyword id="KW-0175">Coiled coil</keyword>
<keyword id="KW-0963">Cytoplasm</keyword>
<keyword id="KW-0206">Cytoskeleton</keyword>
<keyword id="KW-0227">DNA damage</keyword>
<keyword id="KW-0234">DNA repair</keyword>
<keyword id="KW-0498">Mitosis</keyword>
<keyword id="KW-0539">Nucleus</keyword>
<keyword id="KW-0597">Phosphoprotein</keyword>
<keyword id="KW-1185">Reference proteome</keyword>
<reference key="1">
    <citation type="journal article" date="2009" name="PLoS Biol.">
        <title>Lineage-specific biology revealed by a finished genome assembly of the mouse.</title>
        <authorList>
            <person name="Church D.M."/>
            <person name="Goodstadt L."/>
            <person name="Hillier L.W."/>
            <person name="Zody M.C."/>
            <person name="Goldstein S."/>
            <person name="She X."/>
            <person name="Bult C.J."/>
            <person name="Agarwala R."/>
            <person name="Cherry J.L."/>
            <person name="DiCuccio M."/>
            <person name="Hlavina W."/>
            <person name="Kapustin Y."/>
            <person name="Meric P."/>
            <person name="Maglott D."/>
            <person name="Birtle Z."/>
            <person name="Marques A.C."/>
            <person name="Graves T."/>
            <person name="Zhou S."/>
            <person name="Teague B."/>
            <person name="Potamousis K."/>
            <person name="Churas C."/>
            <person name="Place M."/>
            <person name="Herschleb J."/>
            <person name="Runnheim R."/>
            <person name="Forrest D."/>
            <person name="Amos-Landgraf J."/>
            <person name="Schwartz D.C."/>
            <person name="Cheng Z."/>
            <person name="Lindblad-Toh K."/>
            <person name="Eichler E.E."/>
            <person name="Ponting C.P."/>
        </authorList>
    </citation>
    <scope>NUCLEOTIDE SEQUENCE [LARGE SCALE GENOMIC DNA]</scope>
    <source>
        <strain>C57BL/6J</strain>
    </source>
</reference>
<reference evidence="15 17" key="2">
    <citation type="journal article" date="2005" name="Science">
        <title>The transcriptional landscape of the mammalian genome.</title>
        <authorList>
            <person name="Carninci P."/>
            <person name="Kasukawa T."/>
            <person name="Katayama S."/>
            <person name="Gough J."/>
            <person name="Frith M.C."/>
            <person name="Maeda N."/>
            <person name="Oyama R."/>
            <person name="Ravasi T."/>
            <person name="Lenhard B."/>
            <person name="Wells C."/>
            <person name="Kodzius R."/>
            <person name="Shimokawa K."/>
            <person name="Bajic V.B."/>
            <person name="Brenner S.E."/>
            <person name="Batalov S."/>
            <person name="Forrest A.R."/>
            <person name="Zavolan M."/>
            <person name="Davis M.J."/>
            <person name="Wilming L.G."/>
            <person name="Aidinis V."/>
            <person name="Allen J.E."/>
            <person name="Ambesi-Impiombato A."/>
            <person name="Apweiler R."/>
            <person name="Aturaliya R.N."/>
            <person name="Bailey T.L."/>
            <person name="Bansal M."/>
            <person name="Baxter L."/>
            <person name="Beisel K.W."/>
            <person name="Bersano T."/>
            <person name="Bono H."/>
            <person name="Chalk A.M."/>
            <person name="Chiu K.P."/>
            <person name="Choudhary V."/>
            <person name="Christoffels A."/>
            <person name="Clutterbuck D.R."/>
            <person name="Crowe M.L."/>
            <person name="Dalla E."/>
            <person name="Dalrymple B.P."/>
            <person name="de Bono B."/>
            <person name="Della Gatta G."/>
            <person name="di Bernardo D."/>
            <person name="Down T."/>
            <person name="Engstrom P."/>
            <person name="Fagiolini M."/>
            <person name="Faulkner G."/>
            <person name="Fletcher C.F."/>
            <person name="Fukushima T."/>
            <person name="Furuno M."/>
            <person name="Futaki S."/>
            <person name="Gariboldi M."/>
            <person name="Georgii-Hemming P."/>
            <person name="Gingeras T.R."/>
            <person name="Gojobori T."/>
            <person name="Green R.E."/>
            <person name="Gustincich S."/>
            <person name="Harbers M."/>
            <person name="Hayashi Y."/>
            <person name="Hensch T.K."/>
            <person name="Hirokawa N."/>
            <person name="Hill D."/>
            <person name="Huminiecki L."/>
            <person name="Iacono M."/>
            <person name="Ikeo K."/>
            <person name="Iwama A."/>
            <person name="Ishikawa T."/>
            <person name="Jakt M."/>
            <person name="Kanapin A."/>
            <person name="Katoh M."/>
            <person name="Kawasawa Y."/>
            <person name="Kelso J."/>
            <person name="Kitamura H."/>
            <person name="Kitano H."/>
            <person name="Kollias G."/>
            <person name="Krishnan S.P."/>
            <person name="Kruger A."/>
            <person name="Kummerfeld S.K."/>
            <person name="Kurochkin I.V."/>
            <person name="Lareau L.F."/>
            <person name="Lazarevic D."/>
            <person name="Lipovich L."/>
            <person name="Liu J."/>
            <person name="Liuni S."/>
            <person name="McWilliam S."/>
            <person name="Madan Babu M."/>
            <person name="Madera M."/>
            <person name="Marchionni L."/>
            <person name="Matsuda H."/>
            <person name="Matsuzawa S."/>
            <person name="Miki H."/>
            <person name="Mignone F."/>
            <person name="Miyake S."/>
            <person name="Morris K."/>
            <person name="Mottagui-Tabar S."/>
            <person name="Mulder N."/>
            <person name="Nakano N."/>
            <person name="Nakauchi H."/>
            <person name="Ng P."/>
            <person name="Nilsson R."/>
            <person name="Nishiguchi S."/>
            <person name="Nishikawa S."/>
            <person name="Nori F."/>
            <person name="Ohara O."/>
            <person name="Okazaki Y."/>
            <person name="Orlando V."/>
            <person name="Pang K.C."/>
            <person name="Pavan W.J."/>
            <person name="Pavesi G."/>
            <person name="Pesole G."/>
            <person name="Petrovsky N."/>
            <person name="Piazza S."/>
            <person name="Reed J."/>
            <person name="Reid J.F."/>
            <person name="Ring B.Z."/>
            <person name="Ringwald M."/>
            <person name="Rost B."/>
            <person name="Ruan Y."/>
            <person name="Salzberg S.L."/>
            <person name="Sandelin A."/>
            <person name="Schneider C."/>
            <person name="Schoenbach C."/>
            <person name="Sekiguchi K."/>
            <person name="Semple C.A."/>
            <person name="Seno S."/>
            <person name="Sessa L."/>
            <person name="Sheng Y."/>
            <person name="Shibata Y."/>
            <person name="Shimada H."/>
            <person name="Shimada K."/>
            <person name="Silva D."/>
            <person name="Sinclair B."/>
            <person name="Sperling S."/>
            <person name="Stupka E."/>
            <person name="Sugiura K."/>
            <person name="Sultana R."/>
            <person name="Takenaka Y."/>
            <person name="Taki K."/>
            <person name="Tammoja K."/>
            <person name="Tan S.L."/>
            <person name="Tang S."/>
            <person name="Taylor M.S."/>
            <person name="Tegner J."/>
            <person name="Teichmann S.A."/>
            <person name="Ueda H.R."/>
            <person name="van Nimwegen E."/>
            <person name="Verardo R."/>
            <person name="Wei C.L."/>
            <person name="Yagi K."/>
            <person name="Yamanishi H."/>
            <person name="Zabarovsky E."/>
            <person name="Zhu S."/>
            <person name="Zimmer A."/>
            <person name="Hide W."/>
            <person name="Bult C."/>
            <person name="Grimmond S.M."/>
            <person name="Teasdale R.D."/>
            <person name="Liu E.T."/>
            <person name="Brusic V."/>
            <person name="Quackenbush J."/>
            <person name="Wahlestedt C."/>
            <person name="Mattick J.S."/>
            <person name="Hume D.A."/>
            <person name="Kai C."/>
            <person name="Sasaki D."/>
            <person name="Tomaru Y."/>
            <person name="Fukuda S."/>
            <person name="Kanamori-Katayama M."/>
            <person name="Suzuki M."/>
            <person name="Aoki J."/>
            <person name="Arakawa T."/>
            <person name="Iida J."/>
            <person name="Imamura K."/>
            <person name="Itoh M."/>
            <person name="Kato T."/>
            <person name="Kawaji H."/>
            <person name="Kawagashira N."/>
            <person name="Kawashima T."/>
            <person name="Kojima M."/>
            <person name="Kondo S."/>
            <person name="Konno H."/>
            <person name="Nakano K."/>
            <person name="Ninomiya N."/>
            <person name="Nishio T."/>
            <person name="Okada M."/>
            <person name="Plessy C."/>
            <person name="Shibata K."/>
            <person name="Shiraki T."/>
            <person name="Suzuki S."/>
            <person name="Tagami M."/>
            <person name="Waki K."/>
            <person name="Watahiki A."/>
            <person name="Okamura-Oho Y."/>
            <person name="Suzuki H."/>
            <person name="Kawai J."/>
            <person name="Hayashizaki Y."/>
        </authorList>
    </citation>
    <scope>NUCLEOTIDE SEQUENCE [LARGE SCALE MRNA] OF 1-114 (ISOFORMS 1/2/3)</scope>
    <scope>NUCLEOTIDE SEQUENCE [LARGE SCALE MRNA] OF 223-862 (ISOFORM 3)</scope>
    <scope>NUCLEOTIDE SEQUENCE [LARGE SCALE MRNA] OF 1028-1446 (ISOFORM 2)</scope>
    <source>
        <strain evidence="17">C57BL/6J</strain>
        <tissue evidence="18">Embryo</tissue>
        <tissue evidence="20">Visual cortex</tissue>
        <tissue evidence="17">Wolffian duct</tissue>
    </source>
</reference>
<reference evidence="15 19" key="3">
    <citation type="submission" date="2005-02" db="EMBL/GenBank/DDBJ databases">
        <title>Prediction of the coding sequences of mouse homologues of KIAA gene. The complete nucleotide sequences of mouse KIAA-homologous cDNAs identified by screening of terminal sequences of cDNA clones randomly sampled from size-fractionated libraries.</title>
        <authorList>
            <person name="Okazaki N."/>
            <person name="Kikuno R.F."/>
            <person name="Ohara R."/>
            <person name="Inamoto S."/>
            <person name="Nagase T."/>
            <person name="Ohara O."/>
            <person name="Koga H."/>
        </authorList>
    </citation>
    <scope>NUCLEOTIDE SEQUENCE [LARGE SCALE MRNA] OF 158-1446 (ISOFORM 2)</scope>
    <source>
        <tissue evidence="19">Fetal brain</tissue>
    </source>
</reference>
<reference evidence="15 16" key="4">
    <citation type="journal article" date="2004" name="Genome Res.">
        <title>The status, quality, and expansion of the NIH full-length cDNA project: the Mammalian Gene Collection (MGC).</title>
        <authorList>
            <consortium name="The MGC Project Team"/>
        </authorList>
    </citation>
    <scope>NUCLEOTIDE SEQUENCE [LARGE SCALE MRNA] OF 909-1446 (ISOFORM 2)</scope>
    <source>
        <strain evidence="16">C57BL/6J</strain>
        <tissue evidence="16">Embryo</tissue>
    </source>
</reference>
<reference key="5">
    <citation type="journal article" date="2010" name="Cell">
        <title>A tissue-specific atlas of mouse protein phosphorylation and expression.</title>
        <authorList>
            <person name="Huttlin E.L."/>
            <person name="Jedrychowski M.P."/>
            <person name="Elias J.E."/>
            <person name="Goswami T."/>
            <person name="Rad R."/>
            <person name="Beausoleil S.A."/>
            <person name="Villen J."/>
            <person name="Haas W."/>
            <person name="Sowa M.E."/>
            <person name="Gygi S.P."/>
        </authorList>
    </citation>
    <scope>IDENTIFICATION BY MASS SPECTROMETRY [LARGE SCALE ANALYSIS]</scope>
    <source>
        <tissue>Testis</tissue>
    </source>
</reference>
<reference key="6">
    <citation type="journal article" date="2012" name="Cell">
        <title>Exome capture reveals ZNF423 and CEP164 mutations, linking renal ciliopathies to DNA damage response signaling.</title>
        <authorList>
            <person name="Chaki M."/>
            <person name="Airik R."/>
            <person name="Ghosh A.K."/>
            <person name="Giles R.H."/>
            <person name="Chen R."/>
            <person name="Slaats G.G."/>
            <person name="Wang H."/>
            <person name="Hurd T.W."/>
            <person name="Zhou W."/>
            <person name="Cluckey A."/>
            <person name="Gee H.Y."/>
            <person name="Ramaswami G."/>
            <person name="Hong C.J."/>
            <person name="Hamilton B.A."/>
            <person name="Cervenka I."/>
            <person name="Ganji R.S."/>
            <person name="Bryja V."/>
            <person name="Arts H.H."/>
            <person name="van Reeuwijk J."/>
            <person name="Oud M.M."/>
            <person name="Letteboer S.J."/>
            <person name="Roepman R."/>
            <person name="Husson H."/>
            <person name="Ibraghimov-Beskrovnaya O."/>
            <person name="Yasunaga T."/>
            <person name="Walz G."/>
            <person name="Eley L."/>
            <person name="Sayer J.A."/>
            <person name="Schermer B."/>
            <person name="Liebau M.C."/>
            <person name="Benzing T."/>
            <person name="Le Corre S."/>
            <person name="Drummond I."/>
            <person name="Janssen S."/>
            <person name="Allen S.J."/>
            <person name="Natarajan S."/>
            <person name="O'Toole J.F."/>
            <person name="Attanasio M."/>
            <person name="Saunier S."/>
            <person name="Antignac C."/>
            <person name="Koenekoop R.K."/>
            <person name="Ren H."/>
            <person name="Lopez I."/>
            <person name="Nayir A."/>
            <person name="Stoetzel C."/>
            <person name="Dollfus H."/>
            <person name="Massoudi R."/>
            <person name="Gleeson J.G."/>
            <person name="Andreoli S.P."/>
            <person name="Doherty D.G."/>
            <person name="Lindstrad A."/>
            <person name="Golzio C."/>
            <person name="Katsanis N."/>
            <person name="Pape L."/>
            <person name="Abboud E.B."/>
            <person name="Al-Rajhi A.A."/>
            <person name="Lewis R.A."/>
            <person name="Omran H."/>
            <person name="Lee E.Y."/>
            <person name="Wang S."/>
            <person name="Sekiguchi J.M."/>
            <person name="Saunders R."/>
            <person name="Johnson C.A."/>
            <person name="Garner E."/>
            <person name="Vanselow K."/>
            <person name="Andersen J.S."/>
            <person name="Shlomai J."/>
            <person name="Nurnberg G."/>
            <person name="Nurnberg P."/>
            <person name="Levy S."/>
            <person name="Smogorzewska A."/>
            <person name="Otto E.A."/>
            <person name="Hildebrandt F."/>
        </authorList>
    </citation>
    <scope>FUNCTION</scope>
    <scope>SUBCELLULAR LOCATION</scope>
</reference>
<reference key="7">
    <citation type="journal article" date="2013" name="J. Biol. Chem.">
        <title>Centrosomal protein DZIP1 regulates Hedgehog signaling by promoting cytoplasmic retention of transcription factor GLI3 and affecting ciliogenesis.</title>
        <authorList>
            <person name="Wang C."/>
            <person name="Low W.C."/>
            <person name="Liu A."/>
            <person name="Wang B."/>
        </authorList>
    </citation>
    <scope>INTERACTION WITH DZIP1</scope>
</reference>
<reference key="8">
    <citation type="journal article" date="2015" name="Mol. Biol. Cell">
        <title>MDM1 is a microtubule-binding protein that negatively regulates centriole duplication.</title>
        <authorList>
            <person name="Van de Mark D."/>
            <person name="Kong D."/>
            <person name="Loncarek J."/>
            <person name="Stearns T."/>
        </authorList>
    </citation>
    <scope>SUBCELLULAR LOCATION</scope>
</reference>
<sequence>MARRPILLGDQLVLEEDSDETYVPSEQEILDFARVIGIDPIKEPELMWLAREGIEAPLPKGWKPCQNITGDLYYFNFDTGQSIWDHPCDEHYRKLVIQERERWSAPGAIKKKDKKKKKEKKNKKDKETSKSPLVLGSPLALVQAPLWGLAPLRGLGDAPPSALRGSQSVSLGSSADSGHLGEPTLPPQGLKAAACAKGLLASVHEGKNALSLLTLGEETNEEDEEESDNQSVRSSSELLKNLHLDLGALGGNFEYEESPRTSQPDKKDVSLDSDADRPPTPGKLFSQGADSSVASANGSKSQGRGASPWNPQKENENSDPKASSSQMAPELDPGGDQPSRASKKQQAEDPVQAGKEGECRRESAAKEPKEASALENTSDVSEESEIHGHLKDARHSGSEASGPKSFLGLDLGFRSRISEHLLDGDTLSPVLGGGHWEAQGLDQEEQDDSKSSIAEPQSKHTQGSEREHLQSSLHSQATEEGPLQTLEGQPEWKEAEGPGKDSVASPAPLSLLQREQVLSPPASPERAEEKHSQAEELGLEQPEAEETEEKVAVCPSSPVSPEVQTAEPAAPQKLFSEAILKGMELEEDQRLLLEFQKEKPQQLEERLWEEEEEEVCQLYQQKEKSLSLLKAQLQKATAEEKEKEEETKIREEESRRLVCLRAQVQSRTEAFENQIRTEQQAALQRLREEAETLQKAERASLEQKSRRALEQLREQLEAEERSAQAALRAEKEAEKEAALLQLREQLEGERKEAVAGLEKKHSAELEQLCSSLEAKHQEVISSLQKKIEGAQQKEEAQLQESLGWAEQRAHQKVHQVTEYEQELSSLLRDKRQEVEREHERKMDKMKEEHWQEMADARERYEAEERKQRADLLGHLTGELERLRRAHERELESMRQEQDQQLEDLRRRHRDHERKLQDLEVELSSRTKDVKARLAQLNVQEENIRKEKQLLLDAQRQAALEREEATATHQHLEEAKKEHTHLLETKQQLRRTIDDLRVRRVELESQVDLLQAQSQRLQKHLSSLEAEVQRKQDVLKEMAAEMNASPHPEPGLHIEDLRKSLDTNKNQEVSSSLSLSKEEIDLSMESVRQFLSAEGVAVRNAKEFLVRQTRSMRRRQTALKAAQQHWRHELASAQEVDEDLPGTEVLGNMRKNLNEETRHLDEMKSAMRKGHDLLKKKEEKLIQLESSLQEEVSDEDTLKGSSIKKVTFDLSDMDDLSSESLESSPVLHITPTPTSADPNKIHYLSSSLQRISSELNGVLNVLGSLNSQPPPQGLGSQPPPPLFTSSLRSSKNVLDPAYSSQAKLSSLSSITPMSTQWAWDPGQGTKLTSSSSSQTVDDFLLEKWRKYFPSGIPLLSGSPPPPENKLGYVSVSEQLHFLQRSHPRVPRTDGVSIQSLIDSNRKWLEHFRNDPKVQLFSSAPKATTTSNLSNLLQLGLDENNRLNVFHY</sequence>
<organism>
    <name type="scientific">Mus musculus</name>
    <name type="common">Mouse</name>
    <dbReference type="NCBI Taxonomy" id="10090"/>
    <lineage>
        <taxon>Eukaryota</taxon>
        <taxon>Metazoa</taxon>
        <taxon>Chordata</taxon>
        <taxon>Craniata</taxon>
        <taxon>Vertebrata</taxon>
        <taxon>Euteleostomi</taxon>
        <taxon>Mammalia</taxon>
        <taxon>Eutheria</taxon>
        <taxon>Euarchontoglires</taxon>
        <taxon>Glires</taxon>
        <taxon>Rodentia</taxon>
        <taxon>Myomorpha</taxon>
        <taxon>Muroidea</taxon>
        <taxon>Muridae</taxon>
        <taxon>Murinae</taxon>
        <taxon>Mus</taxon>
        <taxon>Mus</taxon>
    </lineage>
</organism>
<accession>Q5DU05</accession>
<accession>Q3TYF9</accession>
<accession>Q6NZG6</accession>
<accession>Q8BQD2</accession>
<accession>Q8BSI0</accession>
<evidence type="ECO:0000250" key="1"/>
<evidence type="ECO:0000250" key="2">
    <source>
        <dbReference type="UniProtKB" id="Q9UPV0"/>
    </source>
</evidence>
<evidence type="ECO:0000255" key="3"/>
<evidence type="ECO:0000255" key="4">
    <source>
        <dbReference type="PROSITE-ProRule" id="PRU00224"/>
    </source>
</evidence>
<evidence type="ECO:0000256" key="5">
    <source>
        <dbReference type="SAM" id="MobiDB-lite"/>
    </source>
</evidence>
<evidence type="ECO:0000269" key="6">
    <source>
    </source>
</evidence>
<evidence type="ECO:0000269" key="7">
    <source>
    </source>
</evidence>
<evidence type="ECO:0000269" key="8">
    <source>
    </source>
</evidence>
<evidence type="ECO:0000269" key="9">
    <source>
    </source>
</evidence>
<evidence type="ECO:0000269" key="10">
    <source>
    </source>
</evidence>
<evidence type="ECO:0000269" key="11">
    <source ref="3"/>
</evidence>
<evidence type="ECO:0000303" key="12">
    <source>
    </source>
</evidence>
<evidence type="ECO:0000303" key="13">
    <source>
    </source>
</evidence>
<evidence type="ECO:0000303" key="14">
    <source ref="3"/>
</evidence>
<evidence type="ECO:0000305" key="15"/>
<evidence type="ECO:0000312" key="16">
    <source>
        <dbReference type="EMBL" id="AAH66145.1"/>
    </source>
</evidence>
<evidence type="ECO:0000312" key="17">
    <source>
        <dbReference type="EMBL" id="BAC28073.1"/>
    </source>
</evidence>
<evidence type="ECO:0000312" key="18">
    <source>
        <dbReference type="EMBL" id="BAC34489.1"/>
    </source>
</evidence>
<evidence type="ECO:0000312" key="19">
    <source>
        <dbReference type="EMBL" id="BAD90247.1"/>
    </source>
</evidence>
<evidence type="ECO:0000312" key="20">
    <source>
        <dbReference type="EMBL" id="BAE34604.1"/>
    </source>
</evidence>
<evidence type="ECO:0000312" key="21">
    <source>
        <dbReference type="MGI" id="MGI:2384878"/>
    </source>
</evidence>
<protein>
    <recommendedName>
        <fullName evidence="2">Centrosomal protein of 164 kDa</fullName>
        <shortName evidence="16">Cep164</shortName>
    </recommendedName>
</protein>